<name>EBRA_BACSU</name>
<keyword id="KW-1003">Cell membrane</keyword>
<keyword id="KW-0472">Membrane</keyword>
<keyword id="KW-1185">Reference proteome</keyword>
<keyword id="KW-0812">Transmembrane</keyword>
<keyword id="KW-1133">Transmembrane helix</keyword>
<keyword id="KW-0813">Transport</keyword>
<proteinExistence type="inferred from homology"/>
<organism>
    <name type="scientific">Bacillus subtilis (strain 168)</name>
    <dbReference type="NCBI Taxonomy" id="224308"/>
    <lineage>
        <taxon>Bacteria</taxon>
        <taxon>Bacillati</taxon>
        <taxon>Bacillota</taxon>
        <taxon>Bacilli</taxon>
        <taxon>Bacillales</taxon>
        <taxon>Bacillaceae</taxon>
        <taxon>Bacillus</taxon>
    </lineage>
</organism>
<protein>
    <recommendedName>
        <fullName>Multidrug resistance protein EbrA</fullName>
    </recommendedName>
</protein>
<sequence>MLIGYIFLTIAICSESIGAAMLKVSDGFKKWKPSALVVIGYSLAFYMLSLTLNHIPLSLSYATWSGAGTVLTTVIGVKWFKEDLNAKGLIGILLLLSGVVLLNWP</sequence>
<accession>P0CW80</accession>
<accession>O31792</accession>
<accession>Q9R9I0</accession>
<comment type="function">
    <text evidence="1">Part of a multidrug efflux pump. Confers resistance to cationic lipophilic dyes such as ethidium bromide, acriflavine, pyronine Y and safranin O. The efflux is probably coupled to an influx of protons (By similarity).</text>
</comment>
<comment type="subunit">
    <text evidence="1">The efflux pump is composed of EbrA and EbrB.</text>
</comment>
<comment type="subcellular location">
    <subcellularLocation>
        <location evidence="3">Cell membrane</location>
        <topology evidence="3">Multi-pass membrane protein</topology>
    </subcellularLocation>
</comment>
<comment type="similarity">
    <text evidence="3">Belongs to the drug/metabolite transporter (DMT) superfamily. Small multidrug resistance (SMR) (TC 2.A.7.1) family. EbrA/EbrB subfamily.</text>
</comment>
<evidence type="ECO:0000250" key="1"/>
<evidence type="ECO:0000255" key="2"/>
<evidence type="ECO:0000305" key="3"/>
<reference key="1">
    <citation type="journal article" date="1997" name="Nature">
        <title>The complete genome sequence of the Gram-positive bacterium Bacillus subtilis.</title>
        <authorList>
            <person name="Kunst F."/>
            <person name="Ogasawara N."/>
            <person name="Moszer I."/>
            <person name="Albertini A.M."/>
            <person name="Alloni G."/>
            <person name="Azevedo V."/>
            <person name="Bertero M.G."/>
            <person name="Bessieres P."/>
            <person name="Bolotin A."/>
            <person name="Borchert S."/>
            <person name="Borriss R."/>
            <person name="Boursier L."/>
            <person name="Brans A."/>
            <person name="Braun M."/>
            <person name="Brignell S.C."/>
            <person name="Bron S."/>
            <person name="Brouillet S."/>
            <person name="Bruschi C.V."/>
            <person name="Caldwell B."/>
            <person name="Capuano V."/>
            <person name="Carter N.M."/>
            <person name="Choi S.-K."/>
            <person name="Codani J.-J."/>
            <person name="Connerton I.F."/>
            <person name="Cummings N.J."/>
            <person name="Daniel R.A."/>
            <person name="Denizot F."/>
            <person name="Devine K.M."/>
            <person name="Duesterhoeft A."/>
            <person name="Ehrlich S.D."/>
            <person name="Emmerson P.T."/>
            <person name="Entian K.-D."/>
            <person name="Errington J."/>
            <person name="Fabret C."/>
            <person name="Ferrari E."/>
            <person name="Foulger D."/>
            <person name="Fritz C."/>
            <person name="Fujita M."/>
            <person name="Fujita Y."/>
            <person name="Fuma S."/>
            <person name="Galizzi A."/>
            <person name="Galleron N."/>
            <person name="Ghim S.-Y."/>
            <person name="Glaser P."/>
            <person name="Goffeau A."/>
            <person name="Golightly E.J."/>
            <person name="Grandi G."/>
            <person name="Guiseppi G."/>
            <person name="Guy B.J."/>
            <person name="Haga K."/>
            <person name="Haiech J."/>
            <person name="Harwood C.R."/>
            <person name="Henaut A."/>
            <person name="Hilbert H."/>
            <person name="Holsappel S."/>
            <person name="Hosono S."/>
            <person name="Hullo M.-F."/>
            <person name="Itaya M."/>
            <person name="Jones L.-M."/>
            <person name="Joris B."/>
            <person name="Karamata D."/>
            <person name="Kasahara Y."/>
            <person name="Klaerr-Blanchard M."/>
            <person name="Klein C."/>
            <person name="Kobayashi Y."/>
            <person name="Koetter P."/>
            <person name="Koningstein G."/>
            <person name="Krogh S."/>
            <person name="Kumano M."/>
            <person name="Kurita K."/>
            <person name="Lapidus A."/>
            <person name="Lardinois S."/>
            <person name="Lauber J."/>
            <person name="Lazarevic V."/>
            <person name="Lee S.-M."/>
            <person name="Levine A."/>
            <person name="Liu H."/>
            <person name="Masuda S."/>
            <person name="Mauel C."/>
            <person name="Medigue C."/>
            <person name="Medina N."/>
            <person name="Mellado R.P."/>
            <person name="Mizuno M."/>
            <person name="Moestl D."/>
            <person name="Nakai S."/>
            <person name="Noback M."/>
            <person name="Noone D."/>
            <person name="O'Reilly M."/>
            <person name="Ogawa K."/>
            <person name="Ogiwara A."/>
            <person name="Oudega B."/>
            <person name="Park S.-H."/>
            <person name="Parro V."/>
            <person name="Pohl T.M."/>
            <person name="Portetelle D."/>
            <person name="Porwollik S."/>
            <person name="Prescott A.M."/>
            <person name="Presecan E."/>
            <person name="Pujic P."/>
            <person name="Purnelle B."/>
            <person name="Rapoport G."/>
            <person name="Rey M."/>
            <person name="Reynolds S."/>
            <person name="Rieger M."/>
            <person name="Rivolta C."/>
            <person name="Rocha E."/>
            <person name="Roche B."/>
            <person name="Rose M."/>
            <person name="Sadaie Y."/>
            <person name="Sato T."/>
            <person name="Scanlan E."/>
            <person name="Schleich S."/>
            <person name="Schroeter R."/>
            <person name="Scoffone F."/>
            <person name="Sekiguchi J."/>
            <person name="Sekowska A."/>
            <person name="Seror S.J."/>
            <person name="Serror P."/>
            <person name="Shin B.-S."/>
            <person name="Soldo B."/>
            <person name="Sorokin A."/>
            <person name="Tacconi E."/>
            <person name="Takagi T."/>
            <person name="Takahashi H."/>
            <person name="Takemaru K."/>
            <person name="Takeuchi M."/>
            <person name="Tamakoshi A."/>
            <person name="Tanaka T."/>
            <person name="Terpstra P."/>
            <person name="Tognoni A."/>
            <person name="Tosato V."/>
            <person name="Uchiyama S."/>
            <person name="Vandenbol M."/>
            <person name="Vannier F."/>
            <person name="Vassarotti A."/>
            <person name="Viari A."/>
            <person name="Wambutt R."/>
            <person name="Wedler E."/>
            <person name="Wedler H."/>
            <person name="Weitzenegger T."/>
            <person name="Winters P."/>
            <person name="Wipat A."/>
            <person name="Yamamoto H."/>
            <person name="Yamane K."/>
            <person name="Yasumoto K."/>
            <person name="Yata K."/>
            <person name="Yoshida K."/>
            <person name="Yoshikawa H.-F."/>
            <person name="Zumstein E."/>
            <person name="Yoshikawa H."/>
            <person name="Danchin A."/>
        </authorList>
    </citation>
    <scope>NUCLEOTIDE SEQUENCE [LARGE SCALE GENOMIC DNA]</scope>
    <source>
        <strain>168</strain>
    </source>
</reference>
<gene>
    <name type="primary">ebrA</name>
    <name type="ordered locus">BSU17300</name>
</gene>
<feature type="chain" id="PRO_0000108091" description="Multidrug resistance protein EbrA">
    <location>
        <begin position="1"/>
        <end position="105"/>
    </location>
</feature>
<feature type="transmembrane region" description="Helical" evidence="2">
    <location>
        <begin position="2"/>
        <end position="22"/>
    </location>
</feature>
<feature type="transmembrane region" description="Helical" evidence="2">
    <location>
        <begin position="35"/>
        <end position="55"/>
    </location>
</feature>
<feature type="transmembrane region" description="Helical" evidence="2">
    <location>
        <begin position="57"/>
        <end position="77"/>
    </location>
</feature>
<feature type="transmembrane region" description="Helical" evidence="2">
    <location>
        <begin position="84"/>
        <end position="104"/>
    </location>
</feature>
<dbReference type="EMBL" id="AL009126">
    <property type="protein sequence ID" value="CAB13614.1"/>
    <property type="molecule type" value="Genomic_DNA"/>
</dbReference>
<dbReference type="PIR" id="D69619">
    <property type="entry name" value="D69619"/>
</dbReference>
<dbReference type="RefSeq" id="NP_389612.1">
    <property type="nucleotide sequence ID" value="NC_000964.3"/>
</dbReference>
<dbReference type="RefSeq" id="WP_009967307.1">
    <property type="nucleotide sequence ID" value="NZ_OZ025638.1"/>
</dbReference>
<dbReference type="SMR" id="P0CW80"/>
<dbReference type="FunCoup" id="P0CW80">
    <property type="interactions" value="164"/>
</dbReference>
<dbReference type="STRING" id="224308.BSU17300"/>
<dbReference type="PaxDb" id="224308-BSU17300"/>
<dbReference type="DNASU" id="940059"/>
<dbReference type="EnsemblBacteria" id="CAB13614">
    <property type="protein sequence ID" value="CAB13614"/>
    <property type="gene ID" value="BSU_17300"/>
</dbReference>
<dbReference type="GeneID" id="940059"/>
<dbReference type="KEGG" id="bsu:BSU17300"/>
<dbReference type="PATRIC" id="fig|224308.179.peg.1876"/>
<dbReference type="eggNOG" id="COG2076">
    <property type="taxonomic scope" value="Bacteria"/>
</dbReference>
<dbReference type="InParanoid" id="P0CW80"/>
<dbReference type="OrthoDB" id="21828at2"/>
<dbReference type="PhylomeDB" id="P0CW80"/>
<dbReference type="BioCyc" id="BSUB:BSU17300-MONOMER"/>
<dbReference type="Proteomes" id="UP000001570">
    <property type="component" value="Chromosome"/>
</dbReference>
<dbReference type="GO" id="GO:0005886">
    <property type="term" value="C:plasma membrane"/>
    <property type="evidence" value="ECO:0000318"/>
    <property type="project" value="GO_Central"/>
</dbReference>
<dbReference type="GO" id="GO:0022857">
    <property type="term" value="F:transmembrane transporter activity"/>
    <property type="evidence" value="ECO:0000318"/>
    <property type="project" value="GO_Central"/>
</dbReference>
<dbReference type="GO" id="GO:0055085">
    <property type="term" value="P:transmembrane transport"/>
    <property type="evidence" value="ECO:0000318"/>
    <property type="project" value="GO_Central"/>
</dbReference>
<dbReference type="FunFam" id="1.10.3730.20:FF:000046">
    <property type="entry name" value="Small multidrug resistance efflux transporter"/>
    <property type="match status" value="1"/>
</dbReference>
<dbReference type="Gene3D" id="1.10.3730.20">
    <property type="match status" value="1"/>
</dbReference>
<dbReference type="InterPro" id="IPR000390">
    <property type="entry name" value="Small_drug/metabolite_transptr"/>
</dbReference>
<dbReference type="InterPro" id="IPR045324">
    <property type="entry name" value="Small_multidrug_res"/>
</dbReference>
<dbReference type="PANTHER" id="PTHR30561:SF1">
    <property type="entry name" value="MULTIDRUG TRANSPORTER EMRE"/>
    <property type="match status" value="1"/>
</dbReference>
<dbReference type="PANTHER" id="PTHR30561">
    <property type="entry name" value="SMR FAMILY PROTON-DEPENDENT DRUG EFFLUX TRANSPORTER SUGE"/>
    <property type="match status" value="1"/>
</dbReference>
<dbReference type="Pfam" id="PF00893">
    <property type="entry name" value="Multi_Drug_Res"/>
    <property type="match status" value="1"/>
</dbReference>
<dbReference type="SUPFAM" id="SSF103481">
    <property type="entry name" value="Multidrug resistance efflux transporter EmrE"/>
    <property type="match status" value="1"/>
</dbReference>